<proteinExistence type="inferred from homology"/>
<comment type="function">
    <text evidence="1">Catalyzes the cleavage of 5-oxoproline to form L-glutamate coupled to the hydrolysis of ATP to ADP and inorganic phosphate.</text>
</comment>
<comment type="catalytic activity">
    <reaction evidence="1">
        <text>5-oxo-L-proline + ATP + 2 H2O = L-glutamate + ADP + phosphate + H(+)</text>
        <dbReference type="Rhea" id="RHEA:10348"/>
        <dbReference type="ChEBI" id="CHEBI:15377"/>
        <dbReference type="ChEBI" id="CHEBI:15378"/>
        <dbReference type="ChEBI" id="CHEBI:29985"/>
        <dbReference type="ChEBI" id="CHEBI:30616"/>
        <dbReference type="ChEBI" id="CHEBI:43474"/>
        <dbReference type="ChEBI" id="CHEBI:58402"/>
        <dbReference type="ChEBI" id="CHEBI:456216"/>
        <dbReference type="EC" id="3.5.2.9"/>
    </reaction>
</comment>
<comment type="subunit">
    <text evidence="1">Forms a complex composed of PxpA, PxpB and PxpC.</text>
</comment>
<comment type="similarity">
    <text evidence="1">Belongs to the LamB/PxpA family.</text>
</comment>
<feature type="chain" id="PRO_1000045199" description="5-oxoprolinase subunit A">
    <location>
        <begin position="1"/>
        <end position="244"/>
    </location>
</feature>
<organism>
    <name type="scientific">Citrobacter koseri (strain ATCC BAA-895 / CDC 4225-83 / SGSC4696)</name>
    <dbReference type="NCBI Taxonomy" id="290338"/>
    <lineage>
        <taxon>Bacteria</taxon>
        <taxon>Pseudomonadati</taxon>
        <taxon>Pseudomonadota</taxon>
        <taxon>Gammaproteobacteria</taxon>
        <taxon>Enterobacterales</taxon>
        <taxon>Enterobacteriaceae</taxon>
        <taxon>Citrobacter</taxon>
    </lineage>
</organism>
<sequence length="244" mass="25868">MNIDLNADLGEGCASDAALLQLVSSANIACGFHAGDAQTMLASVREALKNGVAIGAHPSFPDRENFGRTAMTLLPETVYAQTLYQIGALAAIARAEGGVMRHVKPHGMLYNQAAKDPQLADAIARAVHACDPSLILVGLAGSELIRAGEHYGLTTRQEVFADRGYQADGSLVPRTQPGALVEDEEHALAQTLGMVESGRVKSITGEWANVVAQTVCIHGDGEHALAFARRLRAAFEERSIRIMA</sequence>
<protein>
    <recommendedName>
        <fullName evidence="1">5-oxoprolinase subunit A</fullName>
        <shortName evidence="1">5-OPase subunit A</shortName>
        <ecNumber evidence="1">3.5.2.9</ecNumber>
    </recommendedName>
    <alternativeName>
        <fullName evidence="1">5-oxoprolinase (ATP-hydrolyzing) subunit A</fullName>
    </alternativeName>
</protein>
<reference key="1">
    <citation type="submission" date="2007-08" db="EMBL/GenBank/DDBJ databases">
        <authorList>
            <consortium name="The Citrobacter koseri Genome Sequencing Project"/>
            <person name="McClelland M."/>
            <person name="Sanderson E.K."/>
            <person name="Porwollik S."/>
            <person name="Spieth J."/>
            <person name="Clifton W.S."/>
            <person name="Latreille P."/>
            <person name="Courtney L."/>
            <person name="Wang C."/>
            <person name="Pepin K."/>
            <person name="Bhonagiri V."/>
            <person name="Nash W."/>
            <person name="Johnson M."/>
            <person name="Thiruvilangam P."/>
            <person name="Wilson R."/>
        </authorList>
    </citation>
    <scope>NUCLEOTIDE SEQUENCE [LARGE SCALE GENOMIC DNA]</scope>
    <source>
        <strain>ATCC BAA-895 / CDC 4225-83 / SGSC4696</strain>
    </source>
</reference>
<keyword id="KW-0067">ATP-binding</keyword>
<keyword id="KW-0378">Hydrolase</keyword>
<keyword id="KW-0547">Nucleotide-binding</keyword>
<keyword id="KW-1185">Reference proteome</keyword>
<name>PXPA_CITK8</name>
<accession>A8AJA9</accession>
<dbReference type="EC" id="3.5.2.9" evidence="1"/>
<dbReference type="EMBL" id="CP000822">
    <property type="protein sequence ID" value="ABV13572.1"/>
    <property type="molecule type" value="Genomic_DNA"/>
</dbReference>
<dbReference type="RefSeq" id="WP_012133296.1">
    <property type="nucleotide sequence ID" value="NC_009792.1"/>
</dbReference>
<dbReference type="SMR" id="A8AJA9"/>
<dbReference type="STRING" id="290338.CKO_02455"/>
<dbReference type="GeneID" id="45136344"/>
<dbReference type="KEGG" id="cko:CKO_02455"/>
<dbReference type="HOGENOM" id="CLU_069535_0_0_6"/>
<dbReference type="OrthoDB" id="9773478at2"/>
<dbReference type="Proteomes" id="UP000008148">
    <property type="component" value="Chromosome"/>
</dbReference>
<dbReference type="GO" id="GO:0017168">
    <property type="term" value="F:5-oxoprolinase (ATP-hydrolyzing) activity"/>
    <property type="evidence" value="ECO:0007669"/>
    <property type="project" value="UniProtKB-UniRule"/>
</dbReference>
<dbReference type="GO" id="GO:0005524">
    <property type="term" value="F:ATP binding"/>
    <property type="evidence" value="ECO:0007669"/>
    <property type="project" value="UniProtKB-UniRule"/>
</dbReference>
<dbReference type="GO" id="GO:0005975">
    <property type="term" value="P:carbohydrate metabolic process"/>
    <property type="evidence" value="ECO:0007669"/>
    <property type="project" value="InterPro"/>
</dbReference>
<dbReference type="CDD" id="cd10800">
    <property type="entry name" value="LamB_YcsF_YbgL_like"/>
    <property type="match status" value="1"/>
</dbReference>
<dbReference type="Gene3D" id="3.20.20.370">
    <property type="entry name" value="Glycoside hydrolase/deacetylase"/>
    <property type="match status" value="1"/>
</dbReference>
<dbReference type="HAMAP" id="MF_00691">
    <property type="entry name" value="PxpA"/>
    <property type="match status" value="1"/>
</dbReference>
<dbReference type="InterPro" id="IPR011330">
    <property type="entry name" value="Glyco_hydro/deAcase_b/a-brl"/>
</dbReference>
<dbReference type="InterPro" id="IPR005501">
    <property type="entry name" value="LamB/YcsF/PxpA-like"/>
</dbReference>
<dbReference type="NCBIfam" id="NF003812">
    <property type="entry name" value="PRK05406.1-1"/>
    <property type="match status" value="1"/>
</dbReference>
<dbReference type="NCBIfam" id="NF003814">
    <property type="entry name" value="PRK05406.1-3"/>
    <property type="match status" value="1"/>
</dbReference>
<dbReference type="NCBIfam" id="NF003815">
    <property type="entry name" value="PRK05406.1-4"/>
    <property type="match status" value="1"/>
</dbReference>
<dbReference type="NCBIfam" id="NF003816">
    <property type="entry name" value="PRK05406.1-5"/>
    <property type="match status" value="1"/>
</dbReference>
<dbReference type="PANTHER" id="PTHR30292:SF0">
    <property type="entry name" value="5-OXOPROLINASE SUBUNIT A"/>
    <property type="match status" value="1"/>
</dbReference>
<dbReference type="PANTHER" id="PTHR30292">
    <property type="entry name" value="UNCHARACTERIZED PROTEIN YBGL-RELATED"/>
    <property type="match status" value="1"/>
</dbReference>
<dbReference type="Pfam" id="PF03746">
    <property type="entry name" value="LamB_YcsF"/>
    <property type="match status" value="1"/>
</dbReference>
<dbReference type="SUPFAM" id="SSF88713">
    <property type="entry name" value="Glycoside hydrolase/deacetylase"/>
    <property type="match status" value="1"/>
</dbReference>
<evidence type="ECO:0000255" key="1">
    <source>
        <dbReference type="HAMAP-Rule" id="MF_00691"/>
    </source>
</evidence>
<gene>
    <name evidence="1" type="primary">pxpA</name>
    <name type="ordered locus">CKO_02455</name>
</gene>